<keyword id="KW-0025">Alternative splicing</keyword>
<keyword id="KW-1015">Disulfide bond</keyword>
<keyword id="KW-0325">Glycoprotein</keyword>
<keyword id="KW-0328">Glycosyltransferase</keyword>
<keyword id="KW-0333">Golgi apparatus</keyword>
<keyword id="KW-0443">Lipid metabolism</keyword>
<keyword id="KW-0472">Membrane</keyword>
<keyword id="KW-1185">Reference proteome</keyword>
<keyword id="KW-0730">Sialic acid</keyword>
<keyword id="KW-0735">Signal-anchor</keyword>
<keyword id="KW-0808">Transferase</keyword>
<keyword id="KW-0812">Transmembrane</keyword>
<keyword id="KW-1133">Transmembrane helix</keyword>
<sequence>MACSRPPSQCDPTTLPPGPPAGRWPLPFSRRRREMSSNKEQRSAVFVILFALITILILYSSNSANEVFHYGSLRGRTRRPVNLKKWSFSSAYFPILGNKTLPSRCNQCVIITSSSHLLGTKLGPEIERAECTIRMNDAPTSGYSADVGNKTTFRVVAHSSVFRVLRKPQEFVNRTPETVFIFWGPPNKMQKPQGSLLRVIQRAGLMFPNMEAYAVSPARMQQFDDLFRGETGKDREKSHSWLSTGWFTMVIAVELCDHVHVYGMVPPDYCSQRPRLQRMPYHYYEPKGPDECVTYIQNEHSRKGNHHRFITEKRVFSSWAQLYGITFSHPSWT</sequence>
<dbReference type="EC" id="2.4.99.-" evidence="5"/>
<dbReference type="EMBL" id="AB035123">
    <property type="protein sequence ID" value="BAA95940.1"/>
    <property type="molecule type" value="mRNA"/>
</dbReference>
<dbReference type="EMBL" id="AB035174">
    <property type="protein sequence ID" value="BAA87036.1"/>
    <property type="molecule type" value="mRNA"/>
</dbReference>
<dbReference type="EMBL" id="AK030648">
    <property type="protein sequence ID" value="BAC27064.1"/>
    <property type="molecule type" value="mRNA"/>
</dbReference>
<dbReference type="EMBL" id="AL772271">
    <property type="protein sequence ID" value="CAM16604.1"/>
    <property type="status" value="ALT_SEQ"/>
    <property type="molecule type" value="Genomic_DNA"/>
</dbReference>
<dbReference type="EMBL" id="AL772271">
    <property type="protein sequence ID" value="CAM16606.1"/>
    <property type="molecule type" value="Genomic_DNA"/>
</dbReference>
<dbReference type="EMBL" id="AL772271">
    <property type="protein sequence ID" value="CAM16607.1"/>
    <property type="molecule type" value="Genomic_DNA"/>
</dbReference>
<dbReference type="EMBL" id="AL772271">
    <property type="protein sequence ID" value="CAM16608.1"/>
    <property type="status" value="ALT_SEQ"/>
    <property type="molecule type" value="Genomic_DNA"/>
</dbReference>
<dbReference type="EMBL" id="AL772271">
    <property type="protein sequence ID" value="CAM16609.1"/>
    <property type="status" value="ALT_SEQ"/>
    <property type="molecule type" value="Genomic_DNA"/>
</dbReference>
<dbReference type="EMBL" id="AL772271">
    <property type="protein sequence ID" value="CAM16610.1"/>
    <property type="status" value="ALT_SEQ"/>
    <property type="molecule type" value="Genomic_DNA"/>
</dbReference>
<dbReference type="EMBL" id="AL772271">
    <property type="protein sequence ID" value="CAM16611.1"/>
    <property type="status" value="ALT_SEQ"/>
    <property type="molecule type" value="Genomic_DNA"/>
</dbReference>
<dbReference type="EMBL" id="BC022924">
    <property type="protein sequence ID" value="AAH22924.1"/>
    <property type="molecule type" value="mRNA"/>
</dbReference>
<dbReference type="CCDS" id="CCDS15923.1">
    <molecule id="Q9JM95-1"/>
</dbReference>
<dbReference type="RefSeq" id="NP_001020481.1">
    <property type="nucleotide sequence ID" value="NM_001025310.2"/>
</dbReference>
<dbReference type="RefSeq" id="NP_001020482.1">
    <property type="nucleotide sequence ID" value="NM_001025311.2"/>
</dbReference>
<dbReference type="RefSeq" id="NP_001276476.1">
    <property type="nucleotide sequence ID" value="NM_001289547.1"/>
</dbReference>
<dbReference type="RefSeq" id="NP_001276477.1">
    <property type="nucleotide sequence ID" value="NM_001289548.1"/>
</dbReference>
<dbReference type="RefSeq" id="NP_001276478.1">
    <property type="nucleotide sequence ID" value="NM_001289549.1"/>
</dbReference>
<dbReference type="RefSeq" id="NP_058669.1">
    <molecule id="Q9JM95-1"/>
    <property type="nucleotide sequence ID" value="NM_016973.3"/>
</dbReference>
<dbReference type="SMR" id="Q9JM95"/>
<dbReference type="FunCoup" id="Q9JM95">
    <property type="interactions" value="605"/>
</dbReference>
<dbReference type="STRING" id="10090.ENSMUSP00000092654"/>
<dbReference type="SwissLipids" id="SLP:000000778"/>
<dbReference type="CAZy" id="GT29">
    <property type="family name" value="Glycosyltransferase Family 29"/>
</dbReference>
<dbReference type="GlyCosmos" id="Q9JM95">
    <property type="glycosylation" value="1 site, No reported glycans"/>
</dbReference>
<dbReference type="GlyGen" id="Q9JM95">
    <property type="glycosylation" value="3 sites, 1 N-linked glycan (2 sites)"/>
</dbReference>
<dbReference type="iPTMnet" id="Q9JM95"/>
<dbReference type="PhosphoSitePlus" id="Q9JM95"/>
<dbReference type="PaxDb" id="10090-ENSMUSP00000080555"/>
<dbReference type="ProteomicsDB" id="257173">
    <molecule id="Q9JM95-1"/>
</dbReference>
<dbReference type="ProteomicsDB" id="257174">
    <molecule id="Q9JM95-2"/>
</dbReference>
<dbReference type="ProteomicsDB" id="257175">
    <molecule id="Q9JM95-3"/>
</dbReference>
<dbReference type="DNASU" id="50935"/>
<dbReference type="Ensembl" id="ENSMUST00000072111.8">
    <molecule id="Q9JM95-1"/>
    <property type="protein sequence ID" value="ENSMUSP00000071983.2"/>
    <property type="gene ID" value="ENSMUSG00000026811.19"/>
</dbReference>
<dbReference type="Ensembl" id="ENSMUST00000081879.12">
    <molecule id="Q9JM95-2"/>
    <property type="protein sequence ID" value="ENSMUSP00000080555.6"/>
    <property type="gene ID" value="ENSMUSG00000026811.19"/>
</dbReference>
<dbReference type="Ensembl" id="ENSMUST00000095044.10">
    <molecule id="Q9JM95-1"/>
    <property type="protein sequence ID" value="ENSMUSP00000092654.4"/>
    <property type="gene ID" value="ENSMUSG00000026811.19"/>
</dbReference>
<dbReference type="Ensembl" id="ENSMUST00000183538.8">
    <molecule id="Q9JM95-3"/>
    <property type="protein sequence ID" value="ENSMUSP00000138916.2"/>
    <property type="gene ID" value="ENSMUSG00000026811.19"/>
</dbReference>
<dbReference type="GeneID" id="50935"/>
<dbReference type="KEGG" id="mmu:50935"/>
<dbReference type="UCSC" id="uc008jgb.2">
    <molecule id="Q9JM95-1"/>
    <property type="organism name" value="mouse"/>
</dbReference>
<dbReference type="AGR" id="MGI:1355316"/>
<dbReference type="CTD" id="30815"/>
<dbReference type="MGI" id="MGI:1355316">
    <property type="gene designation" value="St6galnac6"/>
</dbReference>
<dbReference type="VEuPathDB" id="HostDB:ENSMUSG00000026811"/>
<dbReference type="eggNOG" id="KOG2692">
    <property type="taxonomic scope" value="Eukaryota"/>
</dbReference>
<dbReference type="GeneTree" id="ENSGT00940000160114"/>
<dbReference type="InParanoid" id="Q9JM95"/>
<dbReference type="OrthoDB" id="63385at9989"/>
<dbReference type="PhylomeDB" id="Q9JM95"/>
<dbReference type="TreeFam" id="TF323961"/>
<dbReference type="Reactome" id="R-MMU-4085001">
    <property type="pathway name" value="Sialic acid metabolism"/>
</dbReference>
<dbReference type="Reactome" id="R-MMU-9037629">
    <property type="pathway name" value="Lewis blood group biosynthesis"/>
</dbReference>
<dbReference type="Reactome" id="R-MMU-9840309">
    <property type="pathway name" value="Glycosphingolipid biosynthesis"/>
</dbReference>
<dbReference type="BioGRID-ORCS" id="50935">
    <property type="hits" value="2 hits in 80 CRISPR screens"/>
</dbReference>
<dbReference type="ChiTaRS" id="St6galnac6">
    <property type="organism name" value="mouse"/>
</dbReference>
<dbReference type="PRO" id="PR:Q9JM95"/>
<dbReference type="Proteomes" id="UP000000589">
    <property type="component" value="Chromosome 2"/>
</dbReference>
<dbReference type="RNAct" id="Q9JM95">
    <property type="molecule type" value="protein"/>
</dbReference>
<dbReference type="Bgee" id="ENSMUSG00000026811">
    <property type="expression patterns" value="Expressed in left colon and 253 other cell types or tissues"/>
</dbReference>
<dbReference type="ExpressionAtlas" id="Q9JM95">
    <property type="expression patterns" value="baseline and differential"/>
</dbReference>
<dbReference type="GO" id="GO:0005737">
    <property type="term" value="C:cytoplasm"/>
    <property type="evidence" value="ECO:0000314"/>
    <property type="project" value="MGI"/>
</dbReference>
<dbReference type="GO" id="GO:0000139">
    <property type="term" value="C:Golgi membrane"/>
    <property type="evidence" value="ECO:0007669"/>
    <property type="project" value="UniProtKB-SubCell"/>
</dbReference>
<dbReference type="GO" id="GO:0001665">
    <property type="term" value="F:alpha-N-acetylgalactosaminide alpha-2,6-sialyltransferase activity"/>
    <property type="evidence" value="ECO:0000314"/>
    <property type="project" value="MGI"/>
</dbReference>
<dbReference type="GO" id="GO:0008373">
    <property type="term" value="F:sialyltransferase activity"/>
    <property type="evidence" value="ECO:0000314"/>
    <property type="project" value="BHF-UCL"/>
</dbReference>
<dbReference type="GO" id="GO:0009988">
    <property type="term" value="P:cell-cell recognition"/>
    <property type="evidence" value="ECO:0000305"/>
    <property type="project" value="BHF-UCL"/>
</dbReference>
<dbReference type="GO" id="GO:0001574">
    <property type="term" value="P:ganglioside biosynthetic process"/>
    <property type="evidence" value="ECO:0000314"/>
    <property type="project" value="MGI"/>
</dbReference>
<dbReference type="GO" id="GO:0009312">
    <property type="term" value="P:oligosaccharide biosynthetic process"/>
    <property type="evidence" value="ECO:0000314"/>
    <property type="project" value="BHF-UCL"/>
</dbReference>
<dbReference type="GO" id="GO:0006486">
    <property type="term" value="P:protein glycosylation"/>
    <property type="evidence" value="ECO:0007669"/>
    <property type="project" value="InterPro"/>
</dbReference>
<dbReference type="CDD" id="cd23978">
    <property type="entry name" value="GT29_ST6GALNAC6"/>
    <property type="match status" value="1"/>
</dbReference>
<dbReference type="FunFam" id="3.90.1480.20:FF:000009">
    <property type="entry name" value="alpha-N-acetylgalactosaminide alpha-2,6-sialyltransferase 6 isoform X2"/>
    <property type="match status" value="1"/>
</dbReference>
<dbReference type="Gene3D" id="3.90.1480.20">
    <property type="entry name" value="Glycosyl transferase family 29"/>
    <property type="match status" value="1"/>
</dbReference>
<dbReference type="InterPro" id="IPR001675">
    <property type="entry name" value="Glyco_trans_29"/>
</dbReference>
<dbReference type="InterPro" id="IPR038578">
    <property type="entry name" value="GT29-like_sf"/>
</dbReference>
<dbReference type="PANTHER" id="PTHR45906">
    <property type="entry name" value="ALPHA-N-ACETYL-NEURAMINYL-2,3-BETA-GALACTOSYL-1, 3-N-ACETYL-GALACTOSAMINIDE ALPHA-2,6-SIALYLTRANSFERASE-LIKE"/>
    <property type="match status" value="1"/>
</dbReference>
<dbReference type="PANTHER" id="PTHR45906:SF6">
    <property type="entry name" value="ALPHA-N-ACETYLGALACTOSAMINIDE ALPHA-2,6-SIALYLTRANSFERASE 6"/>
    <property type="match status" value="1"/>
</dbReference>
<dbReference type="Pfam" id="PF00777">
    <property type="entry name" value="Glyco_transf_29"/>
    <property type="match status" value="1"/>
</dbReference>
<accession>Q9JM95</accession>
<accession>A2AK72</accession>
<accession>A2AK76</accession>
<accession>A2AK77</accession>
<accession>A2AK78</accession>
<accession>A2AK79</accession>
<accession>Q05CN1</accession>
<accession>Q8CDC3</accession>
<accession>Q9R0G9</accession>
<feature type="chain" id="PRO_0000314796" description="Alpha-N-acetylgalactosaminide alpha-2,6-sialyltransferase 6">
    <location>
        <begin position="1"/>
        <end position="333"/>
    </location>
</feature>
<feature type="topological domain" description="Cytoplasmic" evidence="3">
    <location>
        <begin position="1"/>
        <end position="43"/>
    </location>
</feature>
<feature type="transmembrane region" description="Helical; Signal-anchor for type II membrane protein" evidence="3">
    <location>
        <begin position="44"/>
        <end position="64"/>
    </location>
</feature>
<feature type="topological domain" description="Lumenal" evidence="3">
    <location>
        <begin position="65"/>
        <end position="333"/>
    </location>
</feature>
<feature type="region of interest" description="Disordered" evidence="4">
    <location>
        <begin position="1"/>
        <end position="27"/>
    </location>
</feature>
<feature type="compositionally biased region" description="Polar residues" evidence="4">
    <location>
        <begin position="1"/>
        <end position="12"/>
    </location>
</feature>
<feature type="glycosylation site" description="N-linked (GlcNAc...) asparagine" evidence="3">
    <location>
        <position position="98"/>
    </location>
</feature>
<feature type="disulfide bond" evidence="1">
    <location>
        <begin position="108"/>
        <end position="256"/>
    </location>
</feature>
<feature type="splice variant" id="VSP_030360" description="In isoform 2." evidence="9">
    <original>MACSRPPSQ</original>
    <variation>MAQGNHEAWGW</variation>
    <location>
        <begin position="1"/>
        <end position="9"/>
    </location>
</feature>
<feature type="splice variant" id="VSP_030361" description="In isoform 3." evidence="8">
    <original>ETGKDR</original>
    <variation>KSPIPG</variation>
    <location>
        <begin position="230"/>
        <end position="235"/>
    </location>
</feature>
<feature type="splice variant" id="VSP_030362" description="In isoform 3." evidence="8">
    <location>
        <begin position="236"/>
        <end position="333"/>
    </location>
</feature>
<feature type="sequence conflict" description="In Ref. 4; AAH22924." evidence="10" ref="4">
    <original>S</original>
    <variation>A</variation>
    <location>
        <position position="103"/>
    </location>
</feature>
<protein>
    <recommendedName>
        <fullName>Alpha-N-acetylgalactosaminide alpha-2,6-sialyltransferase 6</fullName>
        <ecNumber evidence="5">2.4.99.-</ecNumber>
    </recommendedName>
    <alternativeName>
        <fullName>GalNAc alpha-2,6-sialyltransferase VI</fullName>
    </alternativeName>
    <alternativeName>
        <fullName evidence="7">ST6GalNAc VI</fullName>
        <shortName>ST6GalNAcVI</shortName>
    </alternativeName>
    <alternativeName>
        <fullName>Sialyltransferase 7F</fullName>
        <shortName>SIAT7-F</shortName>
    </alternativeName>
</protein>
<gene>
    <name type="primary">St6galnac6</name>
    <name type="synonym">Siat7f</name>
</gene>
<proteinExistence type="evidence at protein level"/>
<comment type="function">
    <text evidence="2 5">Transfers the sialyl group (N-acetyl-alpha-neuraminyl or NeuAc) from CMP-NeuAc onto glycolipids, forming an alpha-2,6-linkage. Produces branched type disialyl structures by transfer of a sialyl group onto the GalNAc or GlcNAc residue inside backbone core chains having a terminal sialic acid with an alpha-2,3-linkage on Gal. ST6GalNAcVI prefers glycolipids to glycoproteins, predominantly catalyzing the biosynthesis of ganglioside GD1alpha from GM1b. Also has activity toward GD1a and GT1b, and can generate DSGG (disialylgalactosylgloboside) from MSGG (monosialylgalactosylgloboside) (PubMed:10702226). Besides GMb1, MSGG and other glycolipids, it shows activity towards sialyl Lc4Cer generating disialyl Lc4Cer, which can lead to the synthesis of disialyl Lewis a (Le(a)), suggested to be a cancer-associated antigen (By similarity).</text>
</comment>
<comment type="catalytic activity">
    <reaction evidence="5">
        <text>a ganglioside GM1b (d18:1(4E)) + CMP-N-acetyl-beta-neuraminate = a ganglioside GD1alpha (d18:1(4E)) + CMP + H(+)</text>
        <dbReference type="Rhea" id="RHEA:41968"/>
        <dbReference type="ChEBI" id="CHEBI:15378"/>
        <dbReference type="ChEBI" id="CHEBI:57812"/>
        <dbReference type="ChEBI" id="CHEBI:60377"/>
        <dbReference type="ChEBI" id="CHEBI:78568"/>
        <dbReference type="ChEBI" id="CHEBI:78569"/>
    </reaction>
    <physiologicalReaction direction="left-to-right" evidence="11">
        <dbReference type="Rhea" id="RHEA:41969"/>
    </physiologicalReaction>
</comment>
<comment type="catalytic activity">
    <reaction evidence="5">
        <text>a ganglioside GD1a (d18:1(4E)) + CMP-N-acetyl-beta-neuraminate = a ganglioside GT1aalpha (d18:1(4E)) + CMP + H(+)</text>
        <dbReference type="Rhea" id="RHEA:41972"/>
        <dbReference type="ChEBI" id="CHEBI:15378"/>
        <dbReference type="ChEBI" id="CHEBI:57812"/>
        <dbReference type="ChEBI" id="CHEBI:60377"/>
        <dbReference type="ChEBI" id="CHEBI:78445"/>
        <dbReference type="ChEBI" id="CHEBI:78571"/>
    </reaction>
    <physiologicalReaction direction="left-to-right" evidence="11">
        <dbReference type="Rhea" id="RHEA:41973"/>
    </physiologicalReaction>
</comment>
<comment type="catalytic activity">
    <reaction evidence="5">
        <text>a ganglioside GT1b (d18:1(4E)) + CMP-N-acetyl-beta-neuraminate = a ganglioside GQ1balpha (d18:1(4E)) + CMP + H(+)</text>
        <dbReference type="Rhea" id="RHEA:41976"/>
        <dbReference type="ChEBI" id="CHEBI:15378"/>
        <dbReference type="ChEBI" id="CHEBI:57812"/>
        <dbReference type="ChEBI" id="CHEBI:60377"/>
        <dbReference type="ChEBI" id="CHEBI:78452"/>
        <dbReference type="ChEBI" id="CHEBI:78572"/>
    </reaction>
    <physiologicalReaction direction="left-to-right" evidence="11">
        <dbReference type="Rhea" id="RHEA:41977"/>
    </physiologicalReaction>
</comment>
<comment type="catalytic activity">
    <reaction evidence="2">
        <text>N-acetyl-alpha-neuraminosyl-(2-&gt;3)-beta-D-galactosyl-(1-&gt;3)-N-acetyl-beta-D-glucosaminyl-(1-&gt;3)-beta-D-galactosyl-(1-&gt;4)-beta-D-glucosyl-(1&lt;-&gt;1')-N-acyl-sphing-4-enine + CMP-N-acetyl-beta-neuraminate = N-acetyl-alpha-neuraminosyl-(2-&gt;3)-beta-D-galactosyl-(1-&gt;3)-[N-acetyl-alpha-neuraminosyl-(2-&gt;6)]-N-acetyl-beta-D-glucosaminyl-(1-&gt;3)-beta-D-galactosyl-(1-&gt;4)-beta-D-glucosyl-(1&lt;-&gt;1')-N-acyl-sphing-4-enine + CMP + H(+)</text>
        <dbReference type="Rhea" id="RHEA:47884"/>
        <dbReference type="ChEBI" id="CHEBI:15378"/>
        <dbReference type="ChEBI" id="CHEBI:57812"/>
        <dbReference type="ChEBI" id="CHEBI:60377"/>
        <dbReference type="ChEBI" id="CHEBI:88073"/>
        <dbReference type="ChEBI" id="CHEBI:88079"/>
    </reaction>
    <physiologicalReaction direction="left-to-right" evidence="2">
        <dbReference type="Rhea" id="RHEA:47885"/>
    </physiologicalReaction>
</comment>
<comment type="catalytic activity">
    <reaction evidence="2">
        <text>a globoside MSGG + CMP-N-acetyl-beta-neuraminate = a globoside DSGG + CMP + H(+)</text>
        <dbReference type="Rhea" id="RHEA:56088"/>
        <dbReference type="ChEBI" id="CHEBI:15378"/>
        <dbReference type="ChEBI" id="CHEBI:57812"/>
        <dbReference type="ChEBI" id="CHEBI:60377"/>
        <dbReference type="ChEBI" id="CHEBI:140623"/>
        <dbReference type="ChEBI" id="CHEBI:140624"/>
    </reaction>
    <physiologicalReaction direction="left-to-right" evidence="2">
        <dbReference type="Rhea" id="RHEA:56089"/>
    </physiologicalReaction>
</comment>
<comment type="catalytic activity">
    <reaction evidence="2">
        <text>3-O-[alpha-Neu5Ac-(2-&gt;3)-beta-D-Gal-(1-&gt;3)-alpha-D-GalNAc]-L-Ser-[protein] + CMP-N-acetyl-beta-neuraminate = a 3-O-{alpha-Neu5Ac-(2-&gt;3)-beta-D-Gal-(1-&gt;3)-[alpha-Neu5Ac-(2-&gt;6)]-alpha-D-GalNAc}-L-seryl-[protein] + CMP + H(+)</text>
        <dbReference type="Rhea" id="RHEA:65280"/>
        <dbReference type="Rhea" id="RHEA-COMP:16760"/>
        <dbReference type="Rhea" id="RHEA-COMP:16761"/>
        <dbReference type="ChEBI" id="CHEBI:15378"/>
        <dbReference type="ChEBI" id="CHEBI:57812"/>
        <dbReference type="ChEBI" id="CHEBI:60377"/>
        <dbReference type="ChEBI" id="CHEBI:156395"/>
        <dbReference type="ChEBI" id="CHEBI:156397"/>
    </reaction>
    <physiologicalReaction direction="left-to-right" evidence="2">
        <dbReference type="Rhea" id="RHEA:65281"/>
    </physiologicalReaction>
</comment>
<comment type="catalytic activity">
    <reaction evidence="2">
        <text>3-O-[alpha-Neu5Ac-(2-&gt;3)-beta-D-Gal-(1-&gt;3)-alpha-D-GalNAc]-L-Thr-[protein] + CMP-N-acetyl-beta-neuraminate = a 3-O-{alpha-Neu5Ac-(2-&gt;3)-beta-D-Gal-(1-&gt;3)-[alpha-Neu5Ac-(2-&gt;6)]-alpha-D-GalNAc}-L-threonyl-[protein] + CMP + H(+)</text>
        <dbReference type="Rhea" id="RHEA:65284"/>
        <dbReference type="Rhea" id="RHEA-COMP:16762"/>
        <dbReference type="Rhea" id="RHEA-COMP:16763"/>
        <dbReference type="ChEBI" id="CHEBI:15378"/>
        <dbReference type="ChEBI" id="CHEBI:57812"/>
        <dbReference type="ChEBI" id="CHEBI:60377"/>
        <dbReference type="ChEBI" id="CHEBI:156396"/>
        <dbReference type="ChEBI" id="CHEBI:156398"/>
    </reaction>
    <physiologicalReaction direction="left-to-right" evidence="2">
        <dbReference type="Rhea" id="RHEA:65285"/>
    </physiologicalReaction>
</comment>
<comment type="subcellular location">
    <subcellularLocation>
        <location evidence="1">Golgi apparatus membrane</location>
        <topology evidence="1">Single-pass type II membrane protein</topology>
    </subcellularLocation>
</comment>
<comment type="alternative products">
    <event type="alternative splicing"/>
    <isoform>
        <id>Q9JM95-1</id>
        <name>1</name>
        <sequence type="displayed"/>
    </isoform>
    <isoform>
        <id>Q9JM95-2</id>
        <name>2</name>
        <sequence type="described" ref="VSP_030360"/>
    </isoform>
    <isoform>
        <id>Q9JM95-3</id>
        <name>3</name>
        <sequence type="described" ref="VSP_030361 VSP_030362"/>
    </isoform>
</comment>
<comment type="tissue specificity">
    <text evidence="5">Widely expressed, the gene expression is most abundant in colon, brain, liver, and heart.</text>
</comment>
<comment type="induction">
    <text evidence="6">After inflammation stimulus.</text>
</comment>
<comment type="similarity">
    <text evidence="10">Belongs to the glycosyltransferase 29 family.</text>
</comment>
<comment type="sequence caution" evidence="10">
    <conflict type="erroneous gene model prediction">
        <sequence resource="EMBL-CDS" id="CAM16604"/>
    </conflict>
</comment>
<comment type="sequence caution" evidence="10">
    <conflict type="erroneous gene model prediction">
        <sequence resource="EMBL-CDS" id="CAM16608"/>
    </conflict>
</comment>
<comment type="sequence caution" evidence="10">
    <conflict type="erroneous gene model prediction">
        <sequence resource="EMBL-CDS" id="CAM16609"/>
    </conflict>
</comment>
<comment type="sequence caution" evidence="10">
    <conflict type="erroneous gene model prediction">
        <sequence resource="EMBL-CDS" id="CAM16610"/>
    </conflict>
</comment>
<comment type="sequence caution" evidence="10">
    <conflict type="erroneous gene model prediction">
        <sequence resource="EMBL-CDS" id="CAM16611"/>
    </conflict>
</comment>
<organism>
    <name type="scientific">Mus musculus</name>
    <name type="common">Mouse</name>
    <dbReference type="NCBI Taxonomy" id="10090"/>
    <lineage>
        <taxon>Eukaryota</taxon>
        <taxon>Metazoa</taxon>
        <taxon>Chordata</taxon>
        <taxon>Craniata</taxon>
        <taxon>Vertebrata</taxon>
        <taxon>Euteleostomi</taxon>
        <taxon>Mammalia</taxon>
        <taxon>Eutheria</taxon>
        <taxon>Euarchontoglires</taxon>
        <taxon>Glires</taxon>
        <taxon>Rodentia</taxon>
        <taxon>Myomorpha</taxon>
        <taxon>Muroidea</taxon>
        <taxon>Muridae</taxon>
        <taxon>Murinae</taxon>
        <taxon>Mus</taxon>
        <taxon>Mus</taxon>
    </lineage>
</organism>
<evidence type="ECO:0000250" key="1"/>
<evidence type="ECO:0000250" key="2">
    <source>
        <dbReference type="UniProtKB" id="Q969X2"/>
    </source>
</evidence>
<evidence type="ECO:0000255" key="3"/>
<evidence type="ECO:0000256" key="4">
    <source>
        <dbReference type="SAM" id="MobiDB-lite"/>
    </source>
</evidence>
<evidence type="ECO:0000269" key="5">
    <source>
    </source>
</evidence>
<evidence type="ECO:0000269" key="6">
    <source>
    </source>
</evidence>
<evidence type="ECO:0000303" key="7">
    <source>
    </source>
</evidence>
<evidence type="ECO:0000303" key="8">
    <source>
    </source>
</evidence>
<evidence type="ECO:0000303" key="9">
    <source>
    </source>
</evidence>
<evidence type="ECO:0000305" key="10"/>
<evidence type="ECO:0000305" key="11">
    <source>
    </source>
</evidence>
<reference key="1">
    <citation type="journal article" date="2000" name="J. Biol. Chem.">
        <title>Molecular cloning and expression of mouse GD1alpha/GT1aalpha/GQ1balpha synthase (ST6GalNAc VI) gene.</title>
        <authorList>
            <person name="Okajima T."/>
            <person name="Chen H.-H."/>
            <person name="Ito H."/>
            <person name="Kiso M."/>
            <person name="Tai T."/>
            <person name="Furukawa K."/>
            <person name="Urano T."/>
            <person name="Furukawa K."/>
        </authorList>
    </citation>
    <scope>NUCLEOTIDE SEQUENCE [MRNA] (ISOFORM 1)</scope>
    <scope>FUNCTION</scope>
    <scope>CATALYTIC ACTIVITY</scope>
    <scope>SUBCELLULAR LOCATION</scope>
    <scope>TISSUE SPECIFICITY</scope>
    <source>
        <strain>C57BL/6J</strain>
        <tissue>Brain</tissue>
        <tissue>Liver</tissue>
    </source>
</reference>
<reference key="2">
    <citation type="journal article" date="2005" name="Science">
        <title>The transcriptional landscape of the mammalian genome.</title>
        <authorList>
            <person name="Carninci P."/>
            <person name="Kasukawa T."/>
            <person name="Katayama S."/>
            <person name="Gough J."/>
            <person name="Frith M.C."/>
            <person name="Maeda N."/>
            <person name="Oyama R."/>
            <person name="Ravasi T."/>
            <person name="Lenhard B."/>
            <person name="Wells C."/>
            <person name="Kodzius R."/>
            <person name="Shimokawa K."/>
            <person name="Bajic V.B."/>
            <person name="Brenner S.E."/>
            <person name="Batalov S."/>
            <person name="Forrest A.R."/>
            <person name="Zavolan M."/>
            <person name="Davis M.J."/>
            <person name="Wilming L.G."/>
            <person name="Aidinis V."/>
            <person name="Allen J.E."/>
            <person name="Ambesi-Impiombato A."/>
            <person name="Apweiler R."/>
            <person name="Aturaliya R.N."/>
            <person name="Bailey T.L."/>
            <person name="Bansal M."/>
            <person name="Baxter L."/>
            <person name="Beisel K.W."/>
            <person name="Bersano T."/>
            <person name="Bono H."/>
            <person name="Chalk A.M."/>
            <person name="Chiu K.P."/>
            <person name="Choudhary V."/>
            <person name="Christoffels A."/>
            <person name="Clutterbuck D.R."/>
            <person name="Crowe M.L."/>
            <person name="Dalla E."/>
            <person name="Dalrymple B.P."/>
            <person name="de Bono B."/>
            <person name="Della Gatta G."/>
            <person name="di Bernardo D."/>
            <person name="Down T."/>
            <person name="Engstrom P."/>
            <person name="Fagiolini M."/>
            <person name="Faulkner G."/>
            <person name="Fletcher C.F."/>
            <person name="Fukushima T."/>
            <person name="Furuno M."/>
            <person name="Futaki S."/>
            <person name="Gariboldi M."/>
            <person name="Georgii-Hemming P."/>
            <person name="Gingeras T.R."/>
            <person name="Gojobori T."/>
            <person name="Green R.E."/>
            <person name="Gustincich S."/>
            <person name="Harbers M."/>
            <person name="Hayashi Y."/>
            <person name="Hensch T.K."/>
            <person name="Hirokawa N."/>
            <person name="Hill D."/>
            <person name="Huminiecki L."/>
            <person name="Iacono M."/>
            <person name="Ikeo K."/>
            <person name="Iwama A."/>
            <person name="Ishikawa T."/>
            <person name="Jakt M."/>
            <person name="Kanapin A."/>
            <person name="Katoh M."/>
            <person name="Kawasawa Y."/>
            <person name="Kelso J."/>
            <person name="Kitamura H."/>
            <person name="Kitano H."/>
            <person name="Kollias G."/>
            <person name="Krishnan S.P."/>
            <person name="Kruger A."/>
            <person name="Kummerfeld S.K."/>
            <person name="Kurochkin I.V."/>
            <person name="Lareau L.F."/>
            <person name="Lazarevic D."/>
            <person name="Lipovich L."/>
            <person name="Liu J."/>
            <person name="Liuni S."/>
            <person name="McWilliam S."/>
            <person name="Madan Babu M."/>
            <person name="Madera M."/>
            <person name="Marchionni L."/>
            <person name="Matsuda H."/>
            <person name="Matsuzawa S."/>
            <person name="Miki H."/>
            <person name="Mignone F."/>
            <person name="Miyake S."/>
            <person name="Morris K."/>
            <person name="Mottagui-Tabar S."/>
            <person name="Mulder N."/>
            <person name="Nakano N."/>
            <person name="Nakauchi H."/>
            <person name="Ng P."/>
            <person name="Nilsson R."/>
            <person name="Nishiguchi S."/>
            <person name="Nishikawa S."/>
            <person name="Nori F."/>
            <person name="Ohara O."/>
            <person name="Okazaki Y."/>
            <person name="Orlando V."/>
            <person name="Pang K.C."/>
            <person name="Pavan W.J."/>
            <person name="Pavesi G."/>
            <person name="Pesole G."/>
            <person name="Petrovsky N."/>
            <person name="Piazza S."/>
            <person name="Reed J."/>
            <person name="Reid J.F."/>
            <person name="Ring B.Z."/>
            <person name="Ringwald M."/>
            <person name="Rost B."/>
            <person name="Ruan Y."/>
            <person name="Salzberg S.L."/>
            <person name="Sandelin A."/>
            <person name="Schneider C."/>
            <person name="Schoenbach C."/>
            <person name="Sekiguchi K."/>
            <person name="Semple C.A."/>
            <person name="Seno S."/>
            <person name="Sessa L."/>
            <person name="Sheng Y."/>
            <person name="Shibata Y."/>
            <person name="Shimada H."/>
            <person name="Shimada K."/>
            <person name="Silva D."/>
            <person name="Sinclair B."/>
            <person name="Sperling S."/>
            <person name="Stupka E."/>
            <person name="Sugiura K."/>
            <person name="Sultana R."/>
            <person name="Takenaka Y."/>
            <person name="Taki K."/>
            <person name="Tammoja K."/>
            <person name="Tan S.L."/>
            <person name="Tang S."/>
            <person name="Taylor M.S."/>
            <person name="Tegner J."/>
            <person name="Teichmann S.A."/>
            <person name="Ueda H.R."/>
            <person name="van Nimwegen E."/>
            <person name="Verardo R."/>
            <person name="Wei C.L."/>
            <person name="Yagi K."/>
            <person name="Yamanishi H."/>
            <person name="Zabarovsky E."/>
            <person name="Zhu S."/>
            <person name="Zimmer A."/>
            <person name="Hide W."/>
            <person name="Bult C."/>
            <person name="Grimmond S.M."/>
            <person name="Teasdale R.D."/>
            <person name="Liu E.T."/>
            <person name="Brusic V."/>
            <person name="Quackenbush J."/>
            <person name="Wahlestedt C."/>
            <person name="Mattick J.S."/>
            <person name="Hume D.A."/>
            <person name="Kai C."/>
            <person name="Sasaki D."/>
            <person name="Tomaru Y."/>
            <person name="Fukuda S."/>
            <person name="Kanamori-Katayama M."/>
            <person name="Suzuki M."/>
            <person name="Aoki J."/>
            <person name="Arakawa T."/>
            <person name="Iida J."/>
            <person name="Imamura K."/>
            <person name="Itoh M."/>
            <person name="Kato T."/>
            <person name="Kawaji H."/>
            <person name="Kawagashira N."/>
            <person name="Kawashima T."/>
            <person name="Kojima M."/>
            <person name="Kondo S."/>
            <person name="Konno H."/>
            <person name="Nakano K."/>
            <person name="Ninomiya N."/>
            <person name="Nishio T."/>
            <person name="Okada M."/>
            <person name="Plessy C."/>
            <person name="Shibata K."/>
            <person name="Shiraki T."/>
            <person name="Suzuki S."/>
            <person name="Tagami M."/>
            <person name="Waki K."/>
            <person name="Watahiki A."/>
            <person name="Okamura-Oho Y."/>
            <person name="Suzuki H."/>
            <person name="Kawai J."/>
            <person name="Hayashizaki Y."/>
        </authorList>
    </citation>
    <scope>NUCLEOTIDE SEQUENCE [LARGE SCALE MRNA] (ISOFORM 2)</scope>
    <source>
        <strain>C57BL/6J</strain>
        <tissue>Head</tissue>
    </source>
</reference>
<reference key="3">
    <citation type="journal article" date="2009" name="PLoS Biol.">
        <title>Lineage-specific biology revealed by a finished genome assembly of the mouse.</title>
        <authorList>
            <person name="Church D.M."/>
            <person name="Goodstadt L."/>
            <person name="Hillier L.W."/>
            <person name="Zody M.C."/>
            <person name="Goldstein S."/>
            <person name="She X."/>
            <person name="Bult C.J."/>
            <person name="Agarwala R."/>
            <person name="Cherry J.L."/>
            <person name="DiCuccio M."/>
            <person name="Hlavina W."/>
            <person name="Kapustin Y."/>
            <person name="Meric P."/>
            <person name="Maglott D."/>
            <person name="Birtle Z."/>
            <person name="Marques A.C."/>
            <person name="Graves T."/>
            <person name="Zhou S."/>
            <person name="Teague B."/>
            <person name="Potamousis K."/>
            <person name="Churas C."/>
            <person name="Place M."/>
            <person name="Herschleb J."/>
            <person name="Runnheim R."/>
            <person name="Forrest D."/>
            <person name="Amos-Landgraf J."/>
            <person name="Schwartz D.C."/>
            <person name="Cheng Z."/>
            <person name="Lindblad-Toh K."/>
            <person name="Eichler E.E."/>
            <person name="Ponting C.P."/>
        </authorList>
    </citation>
    <scope>NUCLEOTIDE SEQUENCE [LARGE SCALE GENOMIC DNA]</scope>
    <source>
        <strain>C57BL/6J</strain>
    </source>
</reference>
<reference key="4">
    <citation type="journal article" date="2004" name="Genome Res.">
        <title>The status, quality, and expansion of the NIH full-length cDNA project: the Mammalian Gene Collection (MGC).</title>
        <authorList>
            <consortium name="The MGC Project Team"/>
        </authorList>
    </citation>
    <scope>NUCLEOTIDE SEQUENCE [LARGE SCALE MRNA] (ISOFORM 3)</scope>
    <source>
        <strain>FVB/N</strain>
        <tissue>Colon</tissue>
    </source>
</reference>
<reference key="5">
    <citation type="journal article" date="2005" name="Glycobiology">
        <title>Inflammation-dependent changes in alpha2,3-, alpha2,6-, and alpha2,8-sialic acid glycotopes on serum glycoproteins in mice.</title>
        <authorList>
            <person name="Yasukawa Z."/>
            <person name="Sato C."/>
            <person name="Kitajima K."/>
        </authorList>
    </citation>
    <scope>INDUCTION</scope>
</reference>
<name>SIA7F_MOUSE</name>